<dbReference type="EC" id="6.3.5.7" evidence="1"/>
<dbReference type="EMBL" id="CP000614">
    <property type="protein sequence ID" value="ABO56183.1"/>
    <property type="molecule type" value="Genomic_DNA"/>
</dbReference>
<dbReference type="SMR" id="A4JIT0"/>
<dbReference type="KEGG" id="bvi:Bcep1808_3192"/>
<dbReference type="eggNOG" id="COG0154">
    <property type="taxonomic scope" value="Bacteria"/>
</dbReference>
<dbReference type="HOGENOM" id="CLU_009600_0_3_4"/>
<dbReference type="Proteomes" id="UP000002287">
    <property type="component" value="Chromosome 1"/>
</dbReference>
<dbReference type="GO" id="GO:0030956">
    <property type="term" value="C:glutamyl-tRNA(Gln) amidotransferase complex"/>
    <property type="evidence" value="ECO:0007669"/>
    <property type="project" value="InterPro"/>
</dbReference>
<dbReference type="GO" id="GO:0005524">
    <property type="term" value="F:ATP binding"/>
    <property type="evidence" value="ECO:0007669"/>
    <property type="project" value="UniProtKB-KW"/>
</dbReference>
<dbReference type="GO" id="GO:0050567">
    <property type="term" value="F:glutaminyl-tRNA synthase (glutamine-hydrolyzing) activity"/>
    <property type="evidence" value="ECO:0007669"/>
    <property type="project" value="UniProtKB-UniRule"/>
</dbReference>
<dbReference type="GO" id="GO:0006412">
    <property type="term" value="P:translation"/>
    <property type="evidence" value="ECO:0007669"/>
    <property type="project" value="UniProtKB-UniRule"/>
</dbReference>
<dbReference type="Gene3D" id="3.90.1300.10">
    <property type="entry name" value="Amidase signature (AS) domain"/>
    <property type="match status" value="1"/>
</dbReference>
<dbReference type="HAMAP" id="MF_00120">
    <property type="entry name" value="GatA"/>
    <property type="match status" value="1"/>
</dbReference>
<dbReference type="InterPro" id="IPR000120">
    <property type="entry name" value="Amidase"/>
</dbReference>
<dbReference type="InterPro" id="IPR020556">
    <property type="entry name" value="Amidase_CS"/>
</dbReference>
<dbReference type="InterPro" id="IPR023631">
    <property type="entry name" value="Amidase_dom"/>
</dbReference>
<dbReference type="InterPro" id="IPR036928">
    <property type="entry name" value="AS_sf"/>
</dbReference>
<dbReference type="InterPro" id="IPR004412">
    <property type="entry name" value="GatA"/>
</dbReference>
<dbReference type="NCBIfam" id="TIGR00132">
    <property type="entry name" value="gatA"/>
    <property type="match status" value="1"/>
</dbReference>
<dbReference type="PANTHER" id="PTHR11895:SF151">
    <property type="entry name" value="GLUTAMYL-TRNA(GLN) AMIDOTRANSFERASE SUBUNIT A"/>
    <property type="match status" value="1"/>
</dbReference>
<dbReference type="PANTHER" id="PTHR11895">
    <property type="entry name" value="TRANSAMIDASE"/>
    <property type="match status" value="1"/>
</dbReference>
<dbReference type="Pfam" id="PF01425">
    <property type="entry name" value="Amidase"/>
    <property type="match status" value="1"/>
</dbReference>
<dbReference type="SUPFAM" id="SSF75304">
    <property type="entry name" value="Amidase signature (AS) enzymes"/>
    <property type="match status" value="1"/>
</dbReference>
<dbReference type="PROSITE" id="PS00571">
    <property type="entry name" value="AMIDASES"/>
    <property type="match status" value="1"/>
</dbReference>
<proteinExistence type="inferred from homology"/>
<comment type="function">
    <text evidence="1">Allows the formation of correctly charged Gln-tRNA(Gln) through the transamidation of misacylated Glu-tRNA(Gln) in organisms which lack glutaminyl-tRNA synthetase. The reaction takes place in the presence of glutamine and ATP through an activated gamma-phospho-Glu-tRNA(Gln).</text>
</comment>
<comment type="catalytic activity">
    <reaction evidence="1">
        <text>L-glutamyl-tRNA(Gln) + L-glutamine + ATP + H2O = L-glutaminyl-tRNA(Gln) + L-glutamate + ADP + phosphate + H(+)</text>
        <dbReference type="Rhea" id="RHEA:17521"/>
        <dbReference type="Rhea" id="RHEA-COMP:9681"/>
        <dbReference type="Rhea" id="RHEA-COMP:9684"/>
        <dbReference type="ChEBI" id="CHEBI:15377"/>
        <dbReference type="ChEBI" id="CHEBI:15378"/>
        <dbReference type="ChEBI" id="CHEBI:29985"/>
        <dbReference type="ChEBI" id="CHEBI:30616"/>
        <dbReference type="ChEBI" id="CHEBI:43474"/>
        <dbReference type="ChEBI" id="CHEBI:58359"/>
        <dbReference type="ChEBI" id="CHEBI:78520"/>
        <dbReference type="ChEBI" id="CHEBI:78521"/>
        <dbReference type="ChEBI" id="CHEBI:456216"/>
        <dbReference type="EC" id="6.3.5.7"/>
    </reaction>
</comment>
<comment type="subunit">
    <text evidence="1">Heterotrimer of A, B and C subunits.</text>
</comment>
<comment type="similarity">
    <text evidence="1">Belongs to the amidase family. GatA subfamily.</text>
</comment>
<protein>
    <recommendedName>
        <fullName evidence="1">Glutamyl-tRNA(Gln) amidotransferase subunit A</fullName>
        <shortName evidence="1">Glu-ADT subunit A</shortName>
        <ecNumber evidence="1">6.3.5.7</ecNumber>
    </recommendedName>
</protein>
<evidence type="ECO:0000255" key="1">
    <source>
        <dbReference type="HAMAP-Rule" id="MF_00120"/>
    </source>
</evidence>
<sequence length="496" mass="52504">MHAKSLTELRAALAAKECSAVELAQLYLKRIDAARDLNAFVHVDADLTLAQAKAADAELARGAGGPLTGVPIAHKDVFVTRGWRSTAGSKMLENYQSPFDATVVARLQAAGMVTLGKTNMDEFAMGSSNENSAFGAVKNPWDTHAVPGGSSGGSSAAVAARLAPAATGTDTGGSIRQPASFAGVTGIKPTYGRVSRYGMIAFASSLDQGGPMAQSASDCALLLNAMAGFDERDSTSLERDDEDFTRHLGQPWTAGSDAARPLAGLRIGLPNEYFGAGLADDVRATIDAALKQYEALGATLVPVSLPKTELSIPVYYVIAPAEASSNLSRFDGVRFGHRAAQYGDLLDMYKKSRAEGFGPEVKRRILVGTYVLSHGYYDAYYLQAQKIRRIIAQDFQEAFKSCDVIMGPASPTVAWDLGAKGDDPVQMYLADIYTLSVSLAGLPGMSVPCGFGAGANAKRPVGLQIIGNYFNEARMLQVADAFQRATDWHKQVPAGV</sequence>
<gene>
    <name evidence="1" type="primary">gatA</name>
    <name type="ordered locus">Bcep1808_3192</name>
</gene>
<organism>
    <name type="scientific">Burkholderia vietnamiensis (strain G4 / LMG 22486)</name>
    <name type="common">Burkholderia cepacia (strain R1808)</name>
    <dbReference type="NCBI Taxonomy" id="269482"/>
    <lineage>
        <taxon>Bacteria</taxon>
        <taxon>Pseudomonadati</taxon>
        <taxon>Pseudomonadota</taxon>
        <taxon>Betaproteobacteria</taxon>
        <taxon>Burkholderiales</taxon>
        <taxon>Burkholderiaceae</taxon>
        <taxon>Burkholderia</taxon>
        <taxon>Burkholderia cepacia complex</taxon>
    </lineage>
</organism>
<feature type="chain" id="PRO_1000015813" description="Glutamyl-tRNA(Gln) amidotransferase subunit A">
    <location>
        <begin position="1"/>
        <end position="496"/>
    </location>
</feature>
<feature type="active site" description="Charge relay system" evidence="1">
    <location>
        <position position="75"/>
    </location>
</feature>
<feature type="active site" description="Charge relay system" evidence="1">
    <location>
        <position position="150"/>
    </location>
</feature>
<feature type="active site" description="Acyl-ester intermediate" evidence="1">
    <location>
        <position position="174"/>
    </location>
</feature>
<accession>A4JIT0</accession>
<reference key="1">
    <citation type="submission" date="2007-03" db="EMBL/GenBank/DDBJ databases">
        <title>Complete sequence of chromosome 1 of Burkholderia vietnamiensis G4.</title>
        <authorList>
            <consortium name="US DOE Joint Genome Institute"/>
            <person name="Copeland A."/>
            <person name="Lucas S."/>
            <person name="Lapidus A."/>
            <person name="Barry K."/>
            <person name="Detter J.C."/>
            <person name="Glavina del Rio T."/>
            <person name="Hammon N."/>
            <person name="Israni S."/>
            <person name="Dalin E."/>
            <person name="Tice H."/>
            <person name="Pitluck S."/>
            <person name="Chain P."/>
            <person name="Malfatti S."/>
            <person name="Shin M."/>
            <person name="Vergez L."/>
            <person name="Schmutz J."/>
            <person name="Larimer F."/>
            <person name="Land M."/>
            <person name="Hauser L."/>
            <person name="Kyrpides N."/>
            <person name="Tiedje J."/>
            <person name="Richardson P."/>
        </authorList>
    </citation>
    <scope>NUCLEOTIDE SEQUENCE [LARGE SCALE GENOMIC DNA]</scope>
    <source>
        <strain>G4 / LMG 22486</strain>
    </source>
</reference>
<name>GATA_BURVG</name>
<keyword id="KW-0067">ATP-binding</keyword>
<keyword id="KW-0436">Ligase</keyword>
<keyword id="KW-0547">Nucleotide-binding</keyword>
<keyword id="KW-0648">Protein biosynthesis</keyword>